<feature type="chain" id="PRO_1000188809" description="Acyl carrier protein phosphodiesterase">
    <location>
        <begin position="1"/>
        <end position="193"/>
    </location>
</feature>
<evidence type="ECO:0000255" key="1">
    <source>
        <dbReference type="HAMAP-Rule" id="MF_01950"/>
    </source>
</evidence>
<dbReference type="EC" id="3.1.4.14" evidence="1"/>
<dbReference type="EMBL" id="CP000964">
    <property type="protein sequence ID" value="ACI10473.1"/>
    <property type="molecule type" value="Genomic_DNA"/>
</dbReference>
<dbReference type="SMR" id="B5Y0Y9"/>
<dbReference type="KEGG" id="kpe:KPK_4330"/>
<dbReference type="HOGENOM" id="CLU_099370_1_0_6"/>
<dbReference type="Proteomes" id="UP000001734">
    <property type="component" value="Chromosome"/>
</dbReference>
<dbReference type="GO" id="GO:0008770">
    <property type="term" value="F:[acyl-carrier-protein] phosphodiesterase activity"/>
    <property type="evidence" value="ECO:0007669"/>
    <property type="project" value="UniProtKB-UniRule"/>
</dbReference>
<dbReference type="GO" id="GO:0006633">
    <property type="term" value="P:fatty acid biosynthetic process"/>
    <property type="evidence" value="ECO:0007669"/>
    <property type="project" value="UniProtKB-UniRule"/>
</dbReference>
<dbReference type="HAMAP" id="MF_01950">
    <property type="entry name" value="AcpH"/>
    <property type="match status" value="1"/>
</dbReference>
<dbReference type="InterPro" id="IPR007431">
    <property type="entry name" value="ACP_PD"/>
</dbReference>
<dbReference type="InterPro" id="IPR023491">
    <property type="entry name" value="ACP_phosphodiesterase_gpbac"/>
</dbReference>
<dbReference type="NCBIfam" id="NF007466">
    <property type="entry name" value="PRK10045.1"/>
    <property type="match status" value="1"/>
</dbReference>
<dbReference type="PANTHER" id="PTHR38764">
    <property type="entry name" value="ACYL CARRIER PROTEIN PHOSPHODIESTERASE"/>
    <property type="match status" value="1"/>
</dbReference>
<dbReference type="PANTHER" id="PTHR38764:SF1">
    <property type="entry name" value="ACYL CARRIER PROTEIN PHOSPHODIESTERASE"/>
    <property type="match status" value="1"/>
</dbReference>
<dbReference type="Pfam" id="PF04336">
    <property type="entry name" value="ACP_PD"/>
    <property type="match status" value="1"/>
</dbReference>
<dbReference type="PIRSF" id="PIRSF011489">
    <property type="entry name" value="DUF479"/>
    <property type="match status" value="1"/>
</dbReference>
<proteinExistence type="inferred from homology"/>
<reference key="1">
    <citation type="journal article" date="2008" name="PLoS Genet.">
        <title>Complete genome sequence of the N2-fixing broad host range endophyte Klebsiella pneumoniae 342 and virulence predictions verified in mice.</title>
        <authorList>
            <person name="Fouts D.E."/>
            <person name="Tyler H.L."/>
            <person name="DeBoy R.T."/>
            <person name="Daugherty S."/>
            <person name="Ren Q."/>
            <person name="Badger J.H."/>
            <person name="Durkin A.S."/>
            <person name="Huot H."/>
            <person name="Shrivastava S."/>
            <person name="Kothari S."/>
            <person name="Dodson R.J."/>
            <person name="Mohamoud Y."/>
            <person name="Khouri H."/>
            <person name="Roesch L.F.W."/>
            <person name="Krogfelt K.A."/>
            <person name="Struve C."/>
            <person name="Triplett E.W."/>
            <person name="Methe B.A."/>
        </authorList>
    </citation>
    <scope>NUCLEOTIDE SEQUENCE [LARGE SCALE GENOMIC DNA]</scope>
    <source>
        <strain>342</strain>
    </source>
</reference>
<gene>
    <name evidence="1" type="primary">acpH</name>
    <name type="ordered locus">KPK_4330</name>
</gene>
<keyword id="KW-0275">Fatty acid biosynthesis</keyword>
<keyword id="KW-0276">Fatty acid metabolism</keyword>
<keyword id="KW-0378">Hydrolase</keyword>
<keyword id="KW-0444">Lipid biosynthesis</keyword>
<keyword id="KW-0443">Lipid metabolism</keyword>
<accession>B5Y0Y9</accession>
<organism>
    <name type="scientific">Klebsiella pneumoniae (strain 342)</name>
    <dbReference type="NCBI Taxonomy" id="507522"/>
    <lineage>
        <taxon>Bacteria</taxon>
        <taxon>Pseudomonadati</taxon>
        <taxon>Pseudomonadota</taxon>
        <taxon>Gammaproteobacteria</taxon>
        <taxon>Enterobacterales</taxon>
        <taxon>Enterobacteriaceae</taxon>
        <taxon>Klebsiella/Raoultella group</taxon>
        <taxon>Klebsiella</taxon>
        <taxon>Klebsiella pneumoniae complex</taxon>
    </lineage>
</organism>
<protein>
    <recommendedName>
        <fullName evidence="1">Acyl carrier protein phosphodiesterase</fullName>
        <shortName evidence="1">ACP phosphodiesterase</shortName>
        <ecNumber evidence="1">3.1.4.14</ecNumber>
    </recommendedName>
</protein>
<comment type="function">
    <text evidence="1">Converts holo-ACP to apo-ACP by hydrolytic cleavage of the phosphopantetheine prosthetic group from ACP.</text>
</comment>
<comment type="catalytic activity">
    <reaction evidence="1">
        <text>holo-[ACP] + H2O = apo-[ACP] + (R)-4'-phosphopantetheine + H(+)</text>
        <dbReference type="Rhea" id="RHEA:20537"/>
        <dbReference type="Rhea" id="RHEA-COMP:9685"/>
        <dbReference type="Rhea" id="RHEA-COMP:9690"/>
        <dbReference type="ChEBI" id="CHEBI:15377"/>
        <dbReference type="ChEBI" id="CHEBI:15378"/>
        <dbReference type="ChEBI" id="CHEBI:29999"/>
        <dbReference type="ChEBI" id="CHEBI:61723"/>
        <dbReference type="ChEBI" id="CHEBI:64479"/>
        <dbReference type="EC" id="3.1.4.14"/>
    </reaction>
</comment>
<comment type="similarity">
    <text evidence="1">Belongs to the AcpH family.</text>
</comment>
<name>ACPH_KLEP3</name>
<sequence>MNFLAHLHLAHLADSSLPGNLMADFVRGNPQGDYPAEIIDGIYMHRRIDVMTDNLAEVKEAREWFRPQTRRVAPITLDVMWDHFLSQHWAQLSPDLPLDEFVRYAEQQIVPILPDSPPRFVNLNQYLWSERWLERYQEMDFIQRVLNGMASRRPRLDALRDSWQDLDTHYDQLEGQFWRFYPQMMRLAENKQL</sequence>